<comment type="catalytic activity">
    <reaction>
        <text>2 pyruvate + H(+) = (2S)-2-acetolactate + CO2</text>
        <dbReference type="Rhea" id="RHEA:25249"/>
        <dbReference type="ChEBI" id="CHEBI:15361"/>
        <dbReference type="ChEBI" id="CHEBI:15378"/>
        <dbReference type="ChEBI" id="CHEBI:16526"/>
        <dbReference type="ChEBI" id="CHEBI:58476"/>
        <dbReference type="EC" id="2.2.1.6"/>
    </reaction>
</comment>
<comment type="pathway">
    <text>Amino-acid biosynthesis; L-isoleucine biosynthesis; L-isoleucine from 2-oxobutanoate: step 1/4.</text>
</comment>
<comment type="pathway">
    <text>Amino-acid biosynthesis; L-valine biosynthesis; L-valine from pyruvate: step 1/4.</text>
</comment>
<comment type="subunit">
    <text evidence="1">Dimer of large and small chains.</text>
</comment>
<comment type="similarity">
    <text evidence="3">Belongs to the acetolactate synthase small subunit family.</text>
</comment>
<proteinExistence type="inferred from homology"/>
<evidence type="ECO:0000250" key="1"/>
<evidence type="ECO:0000255" key="2">
    <source>
        <dbReference type="PROSITE-ProRule" id="PRU01007"/>
    </source>
</evidence>
<evidence type="ECO:0000305" key="3"/>
<reference key="1">
    <citation type="journal article" date="1998" name="Nature">
        <title>The complete genome of the hyperthermophilic bacterium Aquifex aeolicus.</title>
        <authorList>
            <person name="Deckert G."/>
            <person name="Warren P.V."/>
            <person name="Gaasterland T."/>
            <person name="Young W.G."/>
            <person name="Lenox A.L."/>
            <person name="Graham D.E."/>
            <person name="Overbeek R."/>
            <person name="Snead M.A."/>
            <person name="Keller M."/>
            <person name="Aujay M."/>
            <person name="Huber R."/>
            <person name="Feldman R.A."/>
            <person name="Short J.M."/>
            <person name="Olsen G.J."/>
            <person name="Swanson R.V."/>
        </authorList>
    </citation>
    <scope>NUCLEOTIDE SEQUENCE [LARGE SCALE GENOMIC DNA]</scope>
    <source>
        <strain>VF5</strain>
    </source>
</reference>
<dbReference type="EC" id="2.2.1.6"/>
<dbReference type="EMBL" id="AE000657">
    <property type="protein sequence ID" value="AAC07662.1"/>
    <property type="molecule type" value="Genomic_DNA"/>
</dbReference>
<dbReference type="PIR" id="E70459">
    <property type="entry name" value="E70459"/>
</dbReference>
<dbReference type="RefSeq" id="NP_214271.1">
    <property type="nucleotide sequence ID" value="NC_000918.1"/>
</dbReference>
<dbReference type="RefSeq" id="WP_010881207.1">
    <property type="nucleotide sequence ID" value="NC_000918.1"/>
</dbReference>
<dbReference type="SMR" id="O67703"/>
<dbReference type="FunCoup" id="O67703">
    <property type="interactions" value="427"/>
</dbReference>
<dbReference type="STRING" id="224324.aq_1851"/>
<dbReference type="EnsemblBacteria" id="AAC07662">
    <property type="protein sequence ID" value="AAC07662"/>
    <property type="gene ID" value="aq_1851"/>
</dbReference>
<dbReference type="KEGG" id="aae:aq_1851"/>
<dbReference type="PATRIC" id="fig|224324.8.peg.1429"/>
<dbReference type="eggNOG" id="COG0440">
    <property type="taxonomic scope" value="Bacteria"/>
</dbReference>
<dbReference type="HOGENOM" id="CLU_055003_1_3_0"/>
<dbReference type="InParanoid" id="O67703"/>
<dbReference type="OrthoDB" id="9787365at2"/>
<dbReference type="UniPathway" id="UPA00047">
    <property type="reaction ID" value="UER00055"/>
</dbReference>
<dbReference type="UniPathway" id="UPA00049">
    <property type="reaction ID" value="UER00059"/>
</dbReference>
<dbReference type="Proteomes" id="UP000000798">
    <property type="component" value="Chromosome"/>
</dbReference>
<dbReference type="GO" id="GO:0005829">
    <property type="term" value="C:cytosol"/>
    <property type="evidence" value="ECO:0000318"/>
    <property type="project" value="GO_Central"/>
</dbReference>
<dbReference type="GO" id="GO:0003984">
    <property type="term" value="F:acetolactate synthase activity"/>
    <property type="evidence" value="ECO:0000318"/>
    <property type="project" value="GO_Central"/>
</dbReference>
<dbReference type="GO" id="GO:1990610">
    <property type="term" value="F:acetolactate synthase regulator activity"/>
    <property type="evidence" value="ECO:0007669"/>
    <property type="project" value="InterPro"/>
</dbReference>
<dbReference type="GO" id="GO:0009097">
    <property type="term" value="P:isoleucine biosynthetic process"/>
    <property type="evidence" value="ECO:0000318"/>
    <property type="project" value="GO_Central"/>
</dbReference>
<dbReference type="GO" id="GO:0009099">
    <property type="term" value="P:L-valine biosynthetic process"/>
    <property type="evidence" value="ECO:0000318"/>
    <property type="project" value="GO_Central"/>
</dbReference>
<dbReference type="CDD" id="cd04878">
    <property type="entry name" value="ACT_AHAS"/>
    <property type="match status" value="1"/>
</dbReference>
<dbReference type="FunFam" id="3.30.70.1150:FF:000001">
    <property type="entry name" value="Acetolactate synthase small subunit"/>
    <property type="match status" value="1"/>
</dbReference>
<dbReference type="FunFam" id="3.30.70.260:FF:000001">
    <property type="entry name" value="Acetolactate synthase, small subunit"/>
    <property type="match status" value="1"/>
</dbReference>
<dbReference type="Gene3D" id="3.30.70.260">
    <property type="match status" value="1"/>
</dbReference>
<dbReference type="Gene3D" id="3.30.70.1150">
    <property type="entry name" value="ACT-like. Chain A, domain 2"/>
    <property type="match status" value="1"/>
</dbReference>
<dbReference type="InterPro" id="IPR004789">
    <property type="entry name" value="Acetalactate_synth_ssu"/>
</dbReference>
<dbReference type="InterPro" id="IPR027271">
    <property type="entry name" value="Acetolactate_synth/TF_NikR_C"/>
</dbReference>
<dbReference type="InterPro" id="IPR019455">
    <property type="entry name" value="Acetolactate_synth_ssu_C"/>
</dbReference>
<dbReference type="InterPro" id="IPR045865">
    <property type="entry name" value="ACT-like_dom_sf"/>
</dbReference>
<dbReference type="InterPro" id="IPR002912">
    <property type="entry name" value="ACT_dom"/>
</dbReference>
<dbReference type="InterPro" id="IPR039557">
    <property type="entry name" value="AHAS_ACT"/>
</dbReference>
<dbReference type="InterPro" id="IPR054480">
    <property type="entry name" value="AHAS_small-like_ACT"/>
</dbReference>
<dbReference type="NCBIfam" id="TIGR00119">
    <property type="entry name" value="acolac_sm"/>
    <property type="match status" value="1"/>
</dbReference>
<dbReference type="NCBIfam" id="NF008864">
    <property type="entry name" value="PRK11895.1"/>
    <property type="match status" value="1"/>
</dbReference>
<dbReference type="PANTHER" id="PTHR30239">
    <property type="entry name" value="ACETOLACTATE SYNTHASE SMALL SUBUNIT"/>
    <property type="match status" value="1"/>
</dbReference>
<dbReference type="PANTHER" id="PTHR30239:SF0">
    <property type="entry name" value="ACETOLACTATE SYNTHASE SMALL SUBUNIT 1, CHLOROPLASTIC"/>
    <property type="match status" value="1"/>
</dbReference>
<dbReference type="Pfam" id="PF22629">
    <property type="entry name" value="ACT_AHAS_ss"/>
    <property type="match status" value="1"/>
</dbReference>
<dbReference type="Pfam" id="PF10369">
    <property type="entry name" value="ALS_ss_C"/>
    <property type="match status" value="1"/>
</dbReference>
<dbReference type="SUPFAM" id="SSF55021">
    <property type="entry name" value="ACT-like"/>
    <property type="match status" value="2"/>
</dbReference>
<dbReference type="PROSITE" id="PS51671">
    <property type="entry name" value="ACT"/>
    <property type="match status" value="1"/>
</dbReference>
<gene>
    <name type="primary">ilvH</name>
    <name type="ordered locus">aq_1851</name>
</gene>
<feature type="chain" id="PRO_0000151405" description="Acetolactate synthase small subunit">
    <location>
        <begin position="1"/>
        <end position="192"/>
    </location>
</feature>
<feature type="domain" description="ACT" evidence="2">
    <location>
        <begin position="29"/>
        <end position="103"/>
    </location>
</feature>
<keyword id="KW-0028">Amino-acid biosynthesis</keyword>
<keyword id="KW-0100">Branched-chain amino acid biosynthesis</keyword>
<keyword id="KW-1185">Reference proteome</keyword>
<keyword id="KW-0808">Transferase</keyword>
<sequence>MADTLGKSELEVIKPQKREIRKGQVRKHIITVKVRNEMGVLARIATLIAGKGYNIEGLSVGETHEKGISRMTIEVIGDDIVIEQVVKQLRRLIDTLKVSDLTDVPHVERELALIKVYTPSSRARDEVLRITEIFRGKVVDVSPDTYTIEVTGDEDKINAMIELLKPFGIKEMARTGKVAMRREMSIKEEENE</sequence>
<organism>
    <name type="scientific">Aquifex aeolicus (strain VF5)</name>
    <dbReference type="NCBI Taxonomy" id="224324"/>
    <lineage>
        <taxon>Bacteria</taxon>
        <taxon>Pseudomonadati</taxon>
        <taxon>Aquificota</taxon>
        <taxon>Aquificia</taxon>
        <taxon>Aquificales</taxon>
        <taxon>Aquificaceae</taxon>
        <taxon>Aquifex</taxon>
    </lineage>
</organism>
<accession>O67703</accession>
<protein>
    <recommendedName>
        <fullName>Acetolactate synthase small subunit</fullName>
        <ecNumber>2.2.1.6</ecNumber>
    </recommendedName>
    <alternativeName>
        <fullName>Acetohydroxy-acid synthase small subunit</fullName>
        <shortName>AHAS</shortName>
        <shortName>ALS</shortName>
    </alternativeName>
</protein>
<name>ILVH_AQUAE</name>